<feature type="chain" id="PRO_0000210594" description="Uncharacterized protein MG406">
    <location>
        <begin position="1"/>
        <end position="158"/>
    </location>
</feature>
<feature type="transmembrane region" description="Helical" evidence="1">
    <location>
        <begin position="12"/>
        <end position="32"/>
    </location>
</feature>
<feature type="transmembrane region" description="Helical" evidence="1">
    <location>
        <begin position="39"/>
        <end position="59"/>
    </location>
</feature>
<feature type="transmembrane region" description="Helical" evidence="1">
    <location>
        <begin position="90"/>
        <end position="110"/>
    </location>
</feature>
<feature type="transmembrane region" description="Helical" evidence="1">
    <location>
        <begin position="113"/>
        <end position="133"/>
    </location>
</feature>
<reference key="1">
    <citation type="journal article" date="1995" name="Science">
        <title>The minimal gene complement of Mycoplasma genitalium.</title>
        <authorList>
            <person name="Fraser C.M."/>
            <person name="Gocayne J.D."/>
            <person name="White O."/>
            <person name="Adams M.D."/>
            <person name="Clayton R.A."/>
            <person name="Fleischmann R.D."/>
            <person name="Bult C.J."/>
            <person name="Kerlavage A.R."/>
            <person name="Sutton G.G."/>
            <person name="Kelley J.M."/>
            <person name="Fritchman J.L."/>
            <person name="Weidman J.F."/>
            <person name="Small K.V."/>
            <person name="Sandusky M."/>
            <person name="Fuhrmann J.L."/>
            <person name="Nguyen D.T."/>
            <person name="Utterback T.R."/>
            <person name="Saudek D.M."/>
            <person name="Phillips C.A."/>
            <person name="Merrick J.M."/>
            <person name="Tomb J.-F."/>
            <person name="Dougherty B.A."/>
            <person name="Bott K.F."/>
            <person name="Hu P.-C."/>
            <person name="Lucier T.S."/>
            <person name="Peterson S.N."/>
            <person name="Smith H.O."/>
            <person name="Hutchison C.A. III"/>
            <person name="Venter J.C."/>
        </authorList>
    </citation>
    <scope>NUCLEOTIDE SEQUENCE [LARGE SCALE GENOMIC DNA]</scope>
    <source>
        <strain>ATCC 33530 / DSM 19775 / NCTC 10195 / G37</strain>
    </source>
</reference>
<reference key="2">
    <citation type="journal article" date="1993" name="J. Bacteriol.">
        <title>A survey of the Mycoplasma genitalium genome by using random sequencing.</title>
        <authorList>
            <person name="Peterson S.N."/>
            <person name="Hu P.-C."/>
            <person name="Bott K.F."/>
            <person name="Hutchison C.A. III"/>
        </authorList>
    </citation>
    <scope>NUCLEOTIDE SEQUENCE [GENOMIC DNA] OF 74-158</scope>
    <source>
        <strain>ATCC 33530 / DSM 19775 / NCTC 10195 / G37</strain>
    </source>
</reference>
<reference key="3">
    <citation type="journal article" date="2006" name="Proc. Natl. Acad. Sci. U.S.A.">
        <title>Essential genes of a minimal bacterium.</title>
        <authorList>
            <person name="Glass J.I."/>
            <person name="Assad-Garcia N."/>
            <person name="Alperovich N."/>
            <person name="Yooseph S."/>
            <person name="Lewis M.R."/>
            <person name="Maruf M."/>
            <person name="Hutchison C.A. III"/>
            <person name="Smith H.O."/>
            <person name="Venter J.C."/>
        </authorList>
    </citation>
    <scope>SEQUENCE REVISION</scope>
    <scope>DISRUPTION PHENOTYPE</scope>
    <source>
        <strain>ATCC 33530 / DSM 19775 / NCTC 10195 / G37</strain>
    </source>
</reference>
<gene>
    <name type="ordered locus">MG406</name>
</gene>
<sequence length="158" mass="18144">MFNWNNRKVAKIITLIIFVAWLFVLILIAVVVLTKGNNLDILFGWMLPLPFAVLNSLSVLRLASFFASLKNVKKQKAVSFFAFFFTARYLIYLIPVIISFVVTPSIFNTIATIISTLFFPILNLVLSFVWLPLEYFFINLISKSKRKHVATGDSFKRN</sequence>
<keyword id="KW-1003">Cell membrane</keyword>
<keyword id="KW-0472">Membrane</keyword>
<keyword id="KW-1185">Reference proteome</keyword>
<keyword id="KW-0812">Transmembrane</keyword>
<keyword id="KW-1133">Transmembrane helix</keyword>
<proteinExistence type="predicted"/>
<dbReference type="EMBL" id="L43967">
    <property type="protein sequence ID" value="AAC71634.2"/>
    <property type="molecule type" value="Genomic_DNA"/>
</dbReference>
<dbReference type="EMBL" id="U01728">
    <property type="protein sequence ID" value="AAC43206.1"/>
    <property type="molecule type" value="Unassigned_DNA"/>
</dbReference>
<dbReference type="PIR" id="I64244">
    <property type="entry name" value="I64244"/>
</dbReference>
<dbReference type="RefSeq" id="WP_010869469.1">
    <property type="nucleotide sequence ID" value="NC_000908.2"/>
</dbReference>
<dbReference type="SMR" id="Q49431"/>
<dbReference type="STRING" id="243273.MG_406"/>
<dbReference type="GeneID" id="88282664"/>
<dbReference type="KEGG" id="mge:MG_406"/>
<dbReference type="eggNOG" id="ENOG5031ZAW">
    <property type="taxonomic scope" value="Bacteria"/>
</dbReference>
<dbReference type="HOGENOM" id="CLU_1675939_0_0_14"/>
<dbReference type="InParanoid" id="Q49431"/>
<dbReference type="OrthoDB" id="9959613at2"/>
<dbReference type="Proteomes" id="UP000000807">
    <property type="component" value="Chromosome"/>
</dbReference>
<dbReference type="GO" id="GO:0005886">
    <property type="term" value="C:plasma membrane"/>
    <property type="evidence" value="ECO:0007669"/>
    <property type="project" value="UniProtKB-SubCell"/>
</dbReference>
<dbReference type="NCBIfam" id="NF033688">
    <property type="entry name" value="MG406_fam"/>
    <property type="match status" value="1"/>
</dbReference>
<evidence type="ECO:0000255" key="1"/>
<evidence type="ECO:0000269" key="2">
    <source>
    </source>
</evidence>
<evidence type="ECO:0000305" key="3"/>
<protein>
    <recommendedName>
        <fullName>Uncharacterized protein MG406</fullName>
    </recommendedName>
</protein>
<name>Y406_MYCGE</name>
<accession>Q49431</accession>
<accession>Q49202</accession>
<comment type="subcellular location">
    <subcellularLocation>
        <location evidence="3">Cell membrane</location>
        <topology evidence="3">Multi-pass membrane protein</topology>
    </subcellularLocation>
</comment>
<comment type="disruption phenotype">
    <text evidence="2">Probably essential, it was not disrupted in a global transposon mutagenesis study.</text>
</comment>
<organism>
    <name type="scientific">Mycoplasma genitalium (strain ATCC 33530 / DSM 19775 / NCTC 10195 / G37)</name>
    <name type="common">Mycoplasmoides genitalium</name>
    <dbReference type="NCBI Taxonomy" id="243273"/>
    <lineage>
        <taxon>Bacteria</taxon>
        <taxon>Bacillati</taxon>
        <taxon>Mycoplasmatota</taxon>
        <taxon>Mycoplasmoidales</taxon>
        <taxon>Mycoplasmoidaceae</taxon>
        <taxon>Mycoplasmoides</taxon>
    </lineage>
</organism>